<evidence type="ECO:0000255" key="1"/>
<evidence type="ECO:0000305" key="2"/>
<gene>
    <name type="primary">stp</name>
    <name type="ordered locus">MT2395</name>
</gene>
<organism>
    <name type="scientific">Mycobacterium tuberculosis (strain CDC 1551 / Oshkosh)</name>
    <dbReference type="NCBI Taxonomy" id="83331"/>
    <lineage>
        <taxon>Bacteria</taxon>
        <taxon>Bacillati</taxon>
        <taxon>Actinomycetota</taxon>
        <taxon>Actinomycetes</taxon>
        <taxon>Mycobacteriales</taxon>
        <taxon>Mycobacteriaceae</taxon>
        <taxon>Mycobacterium</taxon>
        <taxon>Mycobacterium tuberculosis complex</taxon>
    </lineage>
</organism>
<comment type="subcellular location">
    <subcellularLocation>
        <location evidence="2">Cell membrane</location>
        <topology evidence="2">Multi-pass membrane protein</topology>
    </subcellularLocation>
</comment>
<comment type="similarity">
    <text evidence="2">Belongs to the major facilitator superfamily. EmrB family.</text>
</comment>
<keyword id="KW-0046">Antibiotic resistance</keyword>
<keyword id="KW-1003">Cell membrane</keyword>
<keyword id="KW-0472">Membrane</keyword>
<keyword id="KW-1185">Reference proteome</keyword>
<keyword id="KW-0812">Transmembrane</keyword>
<keyword id="KW-1133">Transmembrane helix</keyword>
<keyword id="KW-0813">Transport</keyword>
<dbReference type="EMBL" id="AE000516">
    <property type="protein sequence ID" value="AAK46687.1"/>
    <property type="molecule type" value="Genomic_DNA"/>
</dbReference>
<dbReference type="PIR" id="F70705">
    <property type="entry name" value="F70705"/>
</dbReference>
<dbReference type="RefSeq" id="WP_003899274.1">
    <property type="nucleotide sequence ID" value="NZ_KK341227.1"/>
</dbReference>
<dbReference type="SMR" id="P9WG90"/>
<dbReference type="KEGG" id="mtc:MT2395"/>
<dbReference type="PATRIC" id="fig|83331.31.peg.2583"/>
<dbReference type="HOGENOM" id="CLU_000960_28_2_11"/>
<dbReference type="Proteomes" id="UP000001020">
    <property type="component" value="Chromosome"/>
</dbReference>
<dbReference type="GO" id="GO:0005886">
    <property type="term" value="C:plasma membrane"/>
    <property type="evidence" value="ECO:0007669"/>
    <property type="project" value="UniProtKB-SubCell"/>
</dbReference>
<dbReference type="GO" id="GO:0022857">
    <property type="term" value="F:transmembrane transporter activity"/>
    <property type="evidence" value="ECO:0007669"/>
    <property type="project" value="InterPro"/>
</dbReference>
<dbReference type="GO" id="GO:0046677">
    <property type="term" value="P:response to antibiotic"/>
    <property type="evidence" value="ECO:0007669"/>
    <property type="project" value="UniProtKB-KW"/>
</dbReference>
<dbReference type="CDD" id="cd17321">
    <property type="entry name" value="MFS_MMR_MDR_like"/>
    <property type="match status" value="1"/>
</dbReference>
<dbReference type="Gene3D" id="1.20.1250.20">
    <property type="entry name" value="MFS general substrate transporter like domains"/>
    <property type="match status" value="1"/>
</dbReference>
<dbReference type="Gene3D" id="1.20.1720.10">
    <property type="entry name" value="Multidrug resistance protein D"/>
    <property type="match status" value="1"/>
</dbReference>
<dbReference type="InterPro" id="IPR004638">
    <property type="entry name" value="EmrB-like"/>
</dbReference>
<dbReference type="InterPro" id="IPR011701">
    <property type="entry name" value="MFS"/>
</dbReference>
<dbReference type="InterPro" id="IPR020846">
    <property type="entry name" value="MFS_dom"/>
</dbReference>
<dbReference type="InterPro" id="IPR036259">
    <property type="entry name" value="MFS_trans_sf"/>
</dbReference>
<dbReference type="InterPro" id="IPR005829">
    <property type="entry name" value="Sugar_transporter_CS"/>
</dbReference>
<dbReference type="NCBIfam" id="TIGR00711">
    <property type="entry name" value="efflux_EmrB"/>
    <property type="match status" value="1"/>
</dbReference>
<dbReference type="PANTHER" id="PTHR42718">
    <property type="entry name" value="MAJOR FACILITATOR SUPERFAMILY MULTIDRUG TRANSPORTER MFSC"/>
    <property type="match status" value="1"/>
</dbReference>
<dbReference type="PANTHER" id="PTHR42718:SF9">
    <property type="entry name" value="MAJOR FACILITATOR SUPERFAMILY MULTIDRUG TRANSPORTER MFSC"/>
    <property type="match status" value="1"/>
</dbReference>
<dbReference type="Pfam" id="PF07690">
    <property type="entry name" value="MFS_1"/>
    <property type="match status" value="1"/>
</dbReference>
<dbReference type="PRINTS" id="PR01036">
    <property type="entry name" value="TCRTETB"/>
</dbReference>
<dbReference type="SUPFAM" id="SSF103473">
    <property type="entry name" value="MFS general substrate transporter"/>
    <property type="match status" value="1"/>
</dbReference>
<dbReference type="PROSITE" id="PS50850">
    <property type="entry name" value="MFS"/>
    <property type="match status" value="1"/>
</dbReference>
<dbReference type="PROSITE" id="PS00216">
    <property type="entry name" value="SUGAR_TRANSPORT_1"/>
    <property type="match status" value="1"/>
</dbReference>
<feature type="chain" id="PRO_0000428403" description="Multidrug resistance protein Stp">
    <location>
        <begin position="1"/>
        <end position="537"/>
    </location>
</feature>
<feature type="transmembrane region" description="Helical" evidence="1">
    <location>
        <begin position="6"/>
        <end position="26"/>
    </location>
</feature>
<feature type="transmembrane region" description="Helical" evidence="1">
    <location>
        <begin position="46"/>
        <end position="66"/>
    </location>
</feature>
<feature type="transmembrane region" description="Helical" evidence="1">
    <location>
        <begin position="77"/>
        <end position="97"/>
    </location>
</feature>
<feature type="transmembrane region" description="Helical" evidence="1">
    <location>
        <begin position="104"/>
        <end position="124"/>
    </location>
</feature>
<feature type="transmembrane region" description="Helical" evidence="1">
    <location>
        <begin position="136"/>
        <end position="156"/>
    </location>
</feature>
<feature type="transmembrane region" description="Helical" evidence="1">
    <location>
        <begin position="163"/>
        <end position="183"/>
    </location>
</feature>
<feature type="transmembrane region" description="Helical" evidence="1">
    <location>
        <begin position="200"/>
        <end position="220"/>
    </location>
</feature>
<feature type="transmembrane region" description="Helical" evidence="1">
    <location>
        <begin position="223"/>
        <end position="243"/>
    </location>
</feature>
<feature type="transmembrane region" description="Helical" evidence="1">
    <location>
        <begin position="262"/>
        <end position="282"/>
    </location>
</feature>
<feature type="transmembrane region" description="Helical" evidence="1">
    <location>
        <begin position="300"/>
        <end position="320"/>
    </location>
</feature>
<feature type="transmembrane region" description="Helical" evidence="1">
    <location>
        <begin position="327"/>
        <end position="347"/>
    </location>
</feature>
<feature type="transmembrane region" description="Helical" evidence="1">
    <location>
        <begin position="352"/>
        <end position="372"/>
    </location>
</feature>
<feature type="transmembrane region" description="Helical" evidence="1">
    <location>
        <begin position="397"/>
        <end position="417"/>
    </location>
</feature>
<feature type="transmembrane region" description="Helical" evidence="1">
    <location>
        <begin position="478"/>
        <end position="498"/>
    </location>
</feature>
<protein>
    <recommendedName>
        <fullName>Multidrug resistance protein Stp</fullName>
    </recommendedName>
    <alternativeName>
        <fullName>Spectinomycin tetracycline efflux pump</fullName>
    </alternativeName>
</protein>
<proteinExistence type="inferred from homology"/>
<accession>P9WG90</accession>
<accession>L0TC78</accession>
<accession>O08222</accession>
<accession>P71879</accession>
<accession>Q7D7B2</accession>
<reference key="1">
    <citation type="journal article" date="2002" name="J. Bacteriol.">
        <title>Whole-genome comparison of Mycobacterium tuberculosis clinical and laboratory strains.</title>
        <authorList>
            <person name="Fleischmann R.D."/>
            <person name="Alland D."/>
            <person name="Eisen J.A."/>
            <person name="Carpenter L."/>
            <person name="White O."/>
            <person name="Peterson J.D."/>
            <person name="DeBoy R.T."/>
            <person name="Dodson R.J."/>
            <person name="Gwinn M.L."/>
            <person name="Haft D.H."/>
            <person name="Hickey E.K."/>
            <person name="Kolonay J.F."/>
            <person name="Nelson W.C."/>
            <person name="Umayam L.A."/>
            <person name="Ermolaeva M.D."/>
            <person name="Salzberg S.L."/>
            <person name="Delcher A."/>
            <person name="Utterback T.R."/>
            <person name="Weidman J.F."/>
            <person name="Khouri H.M."/>
            <person name="Gill J."/>
            <person name="Mikula A."/>
            <person name="Bishai W."/>
            <person name="Jacobs W.R. Jr."/>
            <person name="Venter J.C."/>
            <person name="Fraser C.M."/>
        </authorList>
    </citation>
    <scope>NUCLEOTIDE SEQUENCE [LARGE SCALE GENOMIC DNA]</scope>
    <source>
        <strain>CDC 1551 / Oshkosh</strain>
    </source>
</reference>
<sequence length="537" mass="57163">MNRTQLLTLIATGLGLFMIFLDALIVNVALPDIQRSFAVGEDGLQWVVASYSLGMAVFIMSAATLADLYGRRRWYLIGVSLFTLGSIACGLAPSIAVLTTARGAQGLGAAAVSVTSLALVSAAFPEAKEKARAIGIWTAIASIGTTTGPTLGGLLVDQWGWRSIFYVNLPMGALVLFLTLCYVEESCNERARRFDLSGQLLFIVAVGALVYAVIEGPQIGWTSVQTIVMLWTAAVGCALFVWLERRSSNPMMDLTLFRDTSYALAIATICTVFFAVYGMLLLTTQFLQNVRGYTPSVTGLMILPFSAAVAIVSPLVGHLVGRIGARVPILAGLCMLMLGLLMLIFSEHRSSALVLVGLGLCGSGVALCLTPITTVAMTAVPAERAGMASGIMSAQRAIGSTIGFAVLGSVLAAWLSATLEPHLERAVPDPVQRHVLAEIIIDSANPRAHVGGIVPRRHIEHRDPVAIAEEDFIEGIRVALLVATATLAVVFLAGWRWFPRDVHTAGSDLSERLPTAMTVECAVSHMPGATWCRLWPA</sequence>
<name>STP_MYCTO</name>